<evidence type="ECO:0000250" key="1"/>
<evidence type="ECO:0000305" key="2"/>
<organism>
    <name type="scientific">Oryza sativa subsp. indica</name>
    <name type="common">Rice</name>
    <dbReference type="NCBI Taxonomy" id="39946"/>
    <lineage>
        <taxon>Eukaryota</taxon>
        <taxon>Viridiplantae</taxon>
        <taxon>Streptophyta</taxon>
        <taxon>Embryophyta</taxon>
        <taxon>Tracheophyta</taxon>
        <taxon>Spermatophyta</taxon>
        <taxon>Magnoliopsida</taxon>
        <taxon>Liliopsida</taxon>
        <taxon>Poales</taxon>
        <taxon>Poaceae</taxon>
        <taxon>BOP clade</taxon>
        <taxon>Oryzoideae</taxon>
        <taxon>Oryzeae</taxon>
        <taxon>Oryzinae</taxon>
        <taxon>Oryza</taxon>
        <taxon>Oryza sativa</taxon>
    </lineage>
</organism>
<comment type="function">
    <text evidence="1">Hydrolysis of 6-phosphogluconolactone to 6-phosphogluconate.</text>
</comment>
<comment type="catalytic activity">
    <reaction>
        <text>6-phospho-D-glucono-1,5-lactone + H2O = 6-phospho-D-gluconate + H(+)</text>
        <dbReference type="Rhea" id="RHEA:12556"/>
        <dbReference type="ChEBI" id="CHEBI:15377"/>
        <dbReference type="ChEBI" id="CHEBI:15378"/>
        <dbReference type="ChEBI" id="CHEBI:57955"/>
        <dbReference type="ChEBI" id="CHEBI:58759"/>
        <dbReference type="EC" id="3.1.1.31"/>
    </reaction>
</comment>
<comment type="pathway">
    <text>Carbohydrate degradation; pentose phosphate pathway; D-ribulose 5-phosphate from D-glucose 6-phosphate (oxidative stage): step 2/3.</text>
</comment>
<comment type="similarity">
    <text evidence="2">Belongs to the glucosamine/galactosamine-6-phosphate isomerase family. 6-phosphogluconolactonase subfamily.</text>
</comment>
<reference key="1">
    <citation type="journal article" date="2005" name="PLoS Biol.">
        <title>The genomes of Oryza sativa: a history of duplications.</title>
        <authorList>
            <person name="Yu J."/>
            <person name="Wang J."/>
            <person name="Lin W."/>
            <person name="Li S."/>
            <person name="Li H."/>
            <person name="Zhou J."/>
            <person name="Ni P."/>
            <person name="Dong W."/>
            <person name="Hu S."/>
            <person name="Zeng C."/>
            <person name="Zhang J."/>
            <person name="Zhang Y."/>
            <person name="Li R."/>
            <person name="Xu Z."/>
            <person name="Li S."/>
            <person name="Li X."/>
            <person name="Zheng H."/>
            <person name="Cong L."/>
            <person name="Lin L."/>
            <person name="Yin J."/>
            <person name="Geng J."/>
            <person name="Li G."/>
            <person name="Shi J."/>
            <person name="Liu J."/>
            <person name="Lv H."/>
            <person name="Li J."/>
            <person name="Wang J."/>
            <person name="Deng Y."/>
            <person name="Ran L."/>
            <person name="Shi X."/>
            <person name="Wang X."/>
            <person name="Wu Q."/>
            <person name="Li C."/>
            <person name="Ren X."/>
            <person name="Wang J."/>
            <person name="Wang X."/>
            <person name="Li D."/>
            <person name="Liu D."/>
            <person name="Zhang X."/>
            <person name="Ji Z."/>
            <person name="Zhao W."/>
            <person name="Sun Y."/>
            <person name="Zhang Z."/>
            <person name="Bao J."/>
            <person name="Han Y."/>
            <person name="Dong L."/>
            <person name="Ji J."/>
            <person name="Chen P."/>
            <person name="Wu S."/>
            <person name="Liu J."/>
            <person name="Xiao Y."/>
            <person name="Bu D."/>
            <person name="Tan J."/>
            <person name="Yang L."/>
            <person name="Ye C."/>
            <person name="Zhang J."/>
            <person name="Xu J."/>
            <person name="Zhou Y."/>
            <person name="Yu Y."/>
            <person name="Zhang B."/>
            <person name="Zhuang S."/>
            <person name="Wei H."/>
            <person name="Liu B."/>
            <person name="Lei M."/>
            <person name="Yu H."/>
            <person name="Li Y."/>
            <person name="Xu H."/>
            <person name="Wei S."/>
            <person name="He X."/>
            <person name="Fang L."/>
            <person name="Zhang Z."/>
            <person name="Zhang Y."/>
            <person name="Huang X."/>
            <person name="Su Z."/>
            <person name="Tong W."/>
            <person name="Li J."/>
            <person name="Tong Z."/>
            <person name="Li S."/>
            <person name="Ye J."/>
            <person name="Wang L."/>
            <person name="Fang L."/>
            <person name="Lei T."/>
            <person name="Chen C.-S."/>
            <person name="Chen H.-C."/>
            <person name="Xu Z."/>
            <person name="Li H."/>
            <person name="Huang H."/>
            <person name="Zhang F."/>
            <person name="Xu H."/>
            <person name="Li N."/>
            <person name="Zhao C."/>
            <person name="Li S."/>
            <person name="Dong L."/>
            <person name="Huang Y."/>
            <person name="Li L."/>
            <person name="Xi Y."/>
            <person name="Qi Q."/>
            <person name="Li W."/>
            <person name="Zhang B."/>
            <person name="Hu W."/>
            <person name="Zhang Y."/>
            <person name="Tian X."/>
            <person name="Jiao Y."/>
            <person name="Liang X."/>
            <person name="Jin J."/>
            <person name="Gao L."/>
            <person name="Zheng W."/>
            <person name="Hao B."/>
            <person name="Liu S.-M."/>
            <person name="Wang W."/>
            <person name="Yuan L."/>
            <person name="Cao M."/>
            <person name="McDermott J."/>
            <person name="Samudrala R."/>
            <person name="Wang J."/>
            <person name="Wong G.K.-S."/>
            <person name="Yang H."/>
        </authorList>
    </citation>
    <scope>NUCLEOTIDE SEQUENCE [LARGE SCALE GENOMIC DNA]</scope>
    <source>
        <strain>cv. 93-11</strain>
    </source>
</reference>
<dbReference type="EC" id="3.1.1.31"/>
<dbReference type="EMBL" id="CM000132">
    <property type="protein sequence ID" value="EAZ04635.1"/>
    <property type="molecule type" value="Genomic_DNA"/>
</dbReference>
<dbReference type="SMR" id="A2YNH4"/>
<dbReference type="STRING" id="39946.A2YNH4"/>
<dbReference type="iPTMnet" id="A2YNH4"/>
<dbReference type="EnsemblPlants" id="BGIOSGA026090-TA">
    <property type="protein sequence ID" value="BGIOSGA026090-PA"/>
    <property type="gene ID" value="BGIOSGA026090"/>
</dbReference>
<dbReference type="EnsemblPlants" id="OsGoSa_07g0022260.01">
    <property type="protein sequence ID" value="OsGoSa_07g0022260.01"/>
    <property type="gene ID" value="OsGoSa_07g0022260"/>
</dbReference>
<dbReference type="EnsemblPlants" id="OsIR64_07g0022890.01">
    <property type="protein sequence ID" value="OsIR64_07g0022890.01"/>
    <property type="gene ID" value="OsIR64_07g0022890"/>
</dbReference>
<dbReference type="EnsemblPlants" id="OsKYG_07g0022330.01">
    <property type="protein sequence ID" value="OsKYG_07g0022330.01"/>
    <property type="gene ID" value="OsKYG_07g0022330"/>
</dbReference>
<dbReference type="EnsemblPlants" id="OsLaMu_07g0022160.01">
    <property type="protein sequence ID" value="OsLaMu_07g0022160.01"/>
    <property type="gene ID" value="OsLaMu_07g0022160"/>
</dbReference>
<dbReference type="EnsemblPlants" id="OsLima_07g0022170.01">
    <property type="protein sequence ID" value="OsLima_07g0022170.01"/>
    <property type="gene ID" value="OsLima_07g0022170"/>
</dbReference>
<dbReference type="EnsemblPlants" id="OsLiXu_07g0022440.01">
    <property type="protein sequence ID" value="OsLiXu_07g0022440.01"/>
    <property type="gene ID" value="OsLiXu_07g0022440"/>
</dbReference>
<dbReference type="EnsemblPlants" id="OsMH63_07G022180_01">
    <property type="protein sequence ID" value="OsMH63_07G022180_01"/>
    <property type="gene ID" value="OsMH63_07G022180"/>
</dbReference>
<dbReference type="EnsemblPlants" id="OsPr106_07g0022430.01">
    <property type="protein sequence ID" value="OsPr106_07g0022430.01"/>
    <property type="gene ID" value="OsPr106_07g0022430"/>
</dbReference>
<dbReference type="EnsemblPlants" id="OsZS97_07G022060_01">
    <property type="protein sequence ID" value="OsZS97_07G022060_01"/>
    <property type="gene ID" value="OsZS97_07G022060"/>
</dbReference>
<dbReference type="Gramene" id="BGIOSGA026090-TA">
    <property type="protein sequence ID" value="BGIOSGA026090-PA"/>
    <property type="gene ID" value="BGIOSGA026090"/>
</dbReference>
<dbReference type="Gramene" id="OsGoSa_07g0022260.01">
    <property type="protein sequence ID" value="OsGoSa_07g0022260.01"/>
    <property type="gene ID" value="OsGoSa_07g0022260"/>
</dbReference>
<dbReference type="Gramene" id="OsIR64_07g0022890.01">
    <property type="protein sequence ID" value="OsIR64_07g0022890.01"/>
    <property type="gene ID" value="OsIR64_07g0022890"/>
</dbReference>
<dbReference type="Gramene" id="OsKYG_07g0022330.01">
    <property type="protein sequence ID" value="OsKYG_07g0022330.01"/>
    <property type="gene ID" value="OsKYG_07g0022330"/>
</dbReference>
<dbReference type="Gramene" id="OsLaMu_07g0022160.01">
    <property type="protein sequence ID" value="OsLaMu_07g0022160.01"/>
    <property type="gene ID" value="OsLaMu_07g0022160"/>
</dbReference>
<dbReference type="Gramene" id="OsLima_07g0022170.01">
    <property type="protein sequence ID" value="OsLima_07g0022170.01"/>
    <property type="gene ID" value="OsLima_07g0022170"/>
</dbReference>
<dbReference type="Gramene" id="OsLiXu_07g0022440.01">
    <property type="protein sequence ID" value="OsLiXu_07g0022440.01"/>
    <property type="gene ID" value="OsLiXu_07g0022440"/>
</dbReference>
<dbReference type="Gramene" id="OsMH63_07G022180_01">
    <property type="protein sequence ID" value="OsMH63_07G022180_01"/>
    <property type="gene ID" value="OsMH63_07G022180"/>
</dbReference>
<dbReference type="Gramene" id="OsPr106_07g0022430.01">
    <property type="protein sequence ID" value="OsPr106_07g0022430.01"/>
    <property type="gene ID" value="OsPr106_07g0022430"/>
</dbReference>
<dbReference type="Gramene" id="OsZS97_07G022060_01">
    <property type="protein sequence ID" value="OsZS97_07G022060_01"/>
    <property type="gene ID" value="OsZS97_07G022060"/>
</dbReference>
<dbReference type="HOGENOM" id="CLU_053947_0_0_1"/>
<dbReference type="OMA" id="YQLFEFE"/>
<dbReference type="OrthoDB" id="432544at2759"/>
<dbReference type="UniPathway" id="UPA00115">
    <property type="reaction ID" value="UER00409"/>
</dbReference>
<dbReference type="Proteomes" id="UP000007015">
    <property type="component" value="Chromosome 7"/>
</dbReference>
<dbReference type="GO" id="GO:0017057">
    <property type="term" value="F:6-phosphogluconolactonase activity"/>
    <property type="evidence" value="ECO:0007669"/>
    <property type="project" value="UniProtKB-EC"/>
</dbReference>
<dbReference type="GO" id="GO:0005975">
    <property type="term" value="P:carbohydrate metabolic process"/>
    <property type="evidence" value="ECO:0007669"/>
    <property type="project" value="InterPro"/>
</dbReference>
<dbReference type="GO" id="GO:0006098">
    <property type="term" value="P:pentose-phosphate shunt"/>
    <property type="evidence" value="ECO:0007669"/>
    <property type="project" value="UniProtKB-UniPathway"/>
</dbReference>
<dbReference type="CDD" id="cd01400">
    <property type="entry name" value="6PGL"/>
    <property type="match status" value="1"/>
</dbReference>
<dbReference type="FunFam" id="3.40.50.1360:FF:000009">
    <property type="entry name" value="Probable 6-phosphogluconolactonase"/>
    <property type="match status" value="1"/>
</dbReference>
<dbReference type="Gene3D" id="3.40.50.1360">
    <property type="match status" value="1"/>
</dbReference>
<dbReference type="InterPro" id="IPR005900">
    <property type="entry name" value="6-phosphogluconolactonase_DevB"/>
</dbReference>
<dbReference type="InterPro" id="IPR006148">
    <property type="entry name" value="Glc/Gal-6P_isomerase"/>
</dbReference>
<dbReference type="InterPro" id="IPR037171">
    <property type="entry name" value="NagB/RpiA_transferase-like"/>
</dbReference>
<dbReference type="InterPro" id="IPR039104">
    <property type="entry name" value="PGLS"/>
</dbReference>
<dbReference type="NCBIfam" id="TIGR01198">
    <property type="entry name" value="pgl"/>
    <property type="match status" value="1"/>
</dbReference>
<dbReference type="PANTHER" id="PTHR11054">
    <property type="entry name" value="6-PHOSPHOGLUCONOLACTONASE"/>
    <property type="match status" value="1"/>
</dbReference>
<dbReference type="PANTHER" id="PTHR11054:SF8">
    <property type="entry name" value="6-PHOSPHOGLUCONOLACTONASE 2-RELATED"/>
    <property type="match status" value="1"/>
</dbReference>
<dbReference type="Pfam" id="PF01182">
    <property type="entry name" value="Glucosamine_iso"/>
    <property type="match status" value="1"/>
</dbReference>
<dbReference type="SUPFAM" id="SSF100950">
    <property type="entry name" value="NagB/RpiA/CoA transferase-like"/>
    <property type="match status" value="1"/>
</dbReference>
<sequence>MEREISALYEPKRNNEIRIFESSDEMSTDLAEYISQVSEISVKERGYFAIALSGGPLVSFLGKLCEAPYNKTLDWSKWYIFWSDERAVAKNHAESNYRITKEGFLSKVPILNGHVYSINDNATVEDAATDYEFVIRQLVKVRTIGVSESNDCPKFDLILLSMGSDGHVASLFPNHPSLELKDDWITYITDSPQPPPERITFTLPVINSASNIAIVTTGDDKSEAVHLAISDNADGPEAPSSLPARMVQPTDGKLVWFLDKSAASSLDAENDDAFEQHREY</sequence>
<gene>
    <name type="ORF">OsI_025867</name>
</gene>
<proteinExistence type="inferred from homology"/>
<accession>A2YNH4</accession>
<feature type="chain" id="PRO_0000288675" description="Probable 6-phosphogluconolactonase 2">
    <location>
        <begin position="1"/>
        <end position="280"/>
    </location>
</feature>
<name>6PGL2_ORYSI</name>
<protein>
    <recommendedName>
        <fullName>Probable 6-phosphogluconolactonase 2</fullName>
        <shortName>6PGL 2</shortName>
        <ecNumber>3.1.1.31</ecNumber>
    </recommendedName>
</protein>
<keyword id="KW-0378">Hydrolase</keyword>
<keyword id="KW-1185">Reference proteome</keyword>